<dbReference type="EC" id="1.3.3.11" evidence="1"/>
<dbReference type="EMBL" id="CP000964">
    <property type="protein sequence ID" value="ACI08759.1"/>
    <property type="molecule type" value="Genomic_DNA"/>
</dbReference>
<dbReference type="SMR" id="B5XX60"/>
<dbReference type="KEGG" id="kpe:KPK_2543"/>
<dbReference type="HOGENOM" id="CLU_080136_0_0_6"/>
<dbReference type="UniPathway" id="UPA00539"/>
<dbReference type="Proteomes" id="UP000001734">
    <property type="component" value="Chromosome"/>
</dbReference>
<dbReference type="GO" id="GO:0033732">
    <property type="term" value="F:pyrroloquinoline-quinone synthase activity"/>
    <property type="evidence" value="ECO:0007669"/>
    <property type="project" value="UniProtKB-EC"/>
</dbReference>
<dbReference type="GO" id="GO:0018189">
    <property type="term" value="P:pyrroloquinoline quinone biosynthetic process"/>
    <property type="evidence" value="ECO:0007669"/>
    <property type="project" value="UniProtKB-UniRule"/>
</dbReference>
<dbReference type="GO" id="GO:0006790">
    <property type="term" value="P:sulfur compound metabolic process"/>
    <property type="evidence" value="ECO:0007669"/>
    <property type="project" value="UniProtKB-ARBA"/>
</dbReference>
<dbReference type="CDD" id="cd19370">
    <property type="entry name" value="TenA_PqqC"/>
    <property type="match status" value="1"/>
</dbReference>
<dbReference type="Gene3D" id="1.20.910.10">
    <property type="entry name" value="Heme oxygenase-like"/>
    <property type="match status" value="1"/>
</dbReference>
<dbReference type="HAMAP" id="MF_00654">
    <property type="entry name" value="PQQ_syn_PqqC"/>
    <property type="match status" value="1"/>
</dbReference>
<dbReference type="InterPro" id="IPR016084">
    <property type="entry name" value="Haem_Oase-like_multi-hlx"/>
</dbReference>
<dbReference type="InterPro" id="IPR011845">
    <property type="entry name" value="PqqC"/>
</dbReference>
<dbReference type="InterPro" id="IPR039068">
    <property type="entry name" value="PqqC-like"/>
</dbReference>
<dbReference type="InterPro" id="IPR004305">
    <property type="entry name" value="Thiaminase-2/PQQC"/>
</dbReference>
<dbReference type="NCBIfam" id="TIGR02111">
    <property type="entry name" value="PQQ_syn_pqqC"/>
    <property type="match status" value="1"/>
</dbReference>
<dbReference type="PANTHER" id="PTHR40279:SF3">
    <property type="entry name" value="4-AMINOBENZOATE SYNTHASE"/>
    <property type="match status" value="1"/>
</dbReference>
<dbReference type="PANTHER" id="PTHR40279">
    <property type="entry name" value="PQQC-LIKE PROTEIN"/>
    <property type="match status" value="1"/>
</dbReference>
<dbReference type="Pfam" id="PF03070">
    <property type="entry name" value="TENA_THI-4"/>
    <property type="match status" value="1"/>
</dbReference>
<dbReference type="SUPFAM" id="SSF48613">
    <property type="entry name" value="Heme oxygenase-like"/>
    <property type="match status" value="1"/>
</dbReference>
<feature type="chain" id="PRO_1000131177" description="Pyrroloquinoline-quinone synthase">
    <location>
        <begin position="1"/>
        <end position="251"/>
    </location>
</feature>
<proteinExistence type="inferred from homology"/>
<accession>B5XX60</accession>
<reference key="1">
    <citation type="journal article" date="2008" name="PLoS Genet.">
        <title>Complete genome sequence of the N2-fixing broad host range endophyte Klebsiella pneumoniae 342 and virulence predictions verified in mice.</title>
        <authorList>
            <person name="Fouts D.E."/>
            <person name="Tyler H.L."/>
            <person name="DeBoy R.T."/>
            <person name="Daugherty S."/>
            <person name="Ren Q."/>
            <person name="Badger J.H."/>
            <person name="Durkin A.S."/>
            <person name="Huot H."/>
            <person name="Shrivastava S."/>
            <person name="Kothari S."/>
            <person name="Dodson R.J."/>
            <person name="Mohamoud Y."/>
            <person name="Khouri H."/>
            <person name="Roesch L.F.W."/>
            <person name="Krogfelt K.A."/>
            <person name="Struve C."/>
            <person name="Triplett E.W."/>
            <person name="Methe B.A."/>
        </authorList>
    </citation>
    <scope>NUCLEOTIDE SEQUENCE [LARGE SCALE GENOMIC DNA]</scope>
    <source>
        <strain>342</strain>
    </source>
</reference>
<gene>
    <name evidence="1" type="primary">pqqC</name>
    <name type="ordered locus">KPK_2543</name>
</gene>
<evidence type="ECO:0000255" key="1">
    <source>
        <dbReference type="HAMAP-Rule" id="MF_00654"/>
    </source>
</evidence>
<protein>
    <recommendedName>
        <fullName evidence="1">Pyrroloquinoline-quinone synthase</fullName>
        <ecNumber evidence="1">1.3.3.11</ecNumber>
    </recommendedName>
    <alternativeName>
        <fullName evidence="1">Coenzyme PQQ synthesis protein C</fullName>
    </alternativeName>
    <alternativeName>
        <fullName evidence="1">Pyrroloquinoline quinone biosynthesis protein C</fullName>
    </alternativeName>
</protein>
<name>PQQC_KLEP3</name>
<keyword id="KW-0560">Oxidoreductase</keyword>
<keyword id="KW-0884">PQQ biosynthesis</keyword>
<sequence>MLITDTLSPQAFEEALRAKGAFYHIHHPYHIAMHNGEATREQIQGWVANRFYYQTTIPLKDAAIMANCPDAQTRRKWVQRILDHDGSHGEDGGIEAWLRLGEAVGLSRDDLLSERHVLPGVRFAVDAYLNFARRACWQEAACSSLTELFAPQIHQSRLDSWPQHYPWIKEEGYFYFRSRLSQANRDVEHGLALAKTYCDSAEKQNRMLEILQFKLDILWSMLDAMTMAYALQRPPYHTVTDKAAWHTTRLV</sequence>
<comment type="function">
    <text evidence="1">Ring cyclization and eight-electron oxidation of 3a-(2-amino-2-carboxyethyl)-4,5-dioxo-4,5,6,7,8,9-hexahydroquinoline-7,9-dicarboxylic-acid to PQQ.</text>
</comment>
<comment type="catalytic activity">
    <reaction evidence="1">
        <text>6-(2-amino-2-carboxyethyl)-7,8-dioxo-1,2,3,4,7,8-hexahydroquinoline-2,4-dicarboxylate + 3 O2 = pyrroloquinoline quinone + 2 H2O2 + 2 H2O + H(+)</text>
        <dbReference type="Rhea" id="RHEA:10692"/>
        <dbReference type="ChEBI" id="CHEBI:15377"/>
        <dbReference type="ChEBI" id="CHEBI:15378"/>
        <dbReference type="ChEBI" id="CHEBI:15379"/>
        <dbReference type="ChEBI" id="CHEBI:16240"/>
        <dbReference type="ChEBI" id="CHEBI:58442"/>
        <dbReference type="ChEBI" id="CHEBI:58778"/>
        <dbReference type="EC" id="1.3.3.11"/>
    </reaction>
</comment>
<comment type="pathway">
    <text evidence="1">Cofactor biosynthesis; pyrroloquinoline quinone biosynthesis.</text>
</comment>
<comment type="similarity">
    <text evidence="1">Belongs to the PqqC family.</text>
</comment>
<organism>
    <name type="scientific">Klebsiella pneumoniae (strain 342)</name>
    <dbReference type="NCBI Taxonomy" id="507522"/>
    <lineage>
        <taxon>Bacteria</taxon>
        <taxon>Pseudomonadati</taxon>
        <taxon>Pseudomonadota</taxon>
        <taxon>Gammaproteobacteria</taxon>
        <taxon>Enterobacterales</taxon>
        <taxon>Enterobacteriaceae</taxon>
        <taxon>Klebsiella/Raoultella group</taxon>
        <taxon>Klebsiella</taxon>
        <taxon>Klebsiella pneumoniae complex</taxon>
    </lineage>
</organism>